<name>PYRH_METTH</name>
<comment type="function">
    <text evidence="1">Catalyzes the reversible phosphorylation of UMP to UDP.</text>
</comment>
<comment type="catalytic activity">
    <reaction evidence="1">
        <text>UMP + ATP = UDP + ADP</text>
        <dbReference type="Rhea" id="RHEA:24400"/>
        <dbReference type="ChEBI" id="CHEBI:30616"/>
        <dbReference type="ChEBI" id="CHEBI:57865"/>
        <dbReference type="ChEBI" id="CHEBI:58223"/>
        <dbReference type="ChEBI" id="CHEBI:456216"/>
        <dbReference type="EC" id="2.7.4.22"/>
    </reaction>
</comment>
<comment type="activity regulation">
    <text evidence="1">Inhibited by UTP.</text>
</comment>
<comment type="pathway">
    <text evidence="1">Pyrimidine metabolism; CTP biosynthesis via de novo pathway; UDP from UMP (UMPK route): step 1/1.</text>
</comment>
<comment type="subunit">
    <text evidence="1">Homohexamer.</text>
</comment>
<comment type="subcellular location">
    <subcellularLocation>
        <location evidence="1">Cytoplasm</location>
    </subcellularLocation>
</comment>
<comment type="similarity">
    <text evidence="1">Belongs to the UMP kinase family.</text>
</comment>
<sequence length="224" mass="24439">MRIVITIGGSIIISEFSHEMFRAYADILNSLRDEHDLFVVVGGGRPARDYIGVARELGASEARCDDIGIDVTRLNARLLITALGDSAYPGVPENFREALEVAATGRIVVMGGTEPAHSTDAVGAILAETVEADLMINLTSVDGFYDRDPAKYPDARFYPEITASEMLEHLRGSDVRAGTYEFFDHTALHMIRRSGIRTMIVNGNDPENLLRALDGEIGTTVIPE</sequence>
<accession>O26965</accession>
<evidence type="ECO:0000255" key="1">
    <source>
        <dbReference type="HAMAP-Rule" id="MF_01220"/>
    </source>
</evidence>
<dbReference type="EC" id="2.7.4.22" evidence="1"/>
<dbReference type="EMBL" id="AE000666">
    <property type="protein sequence ID" value="AAB85377.1"/>
    <property type="molecule type" value="Genomic_DNA"/>
</dbReference>
<dbReference type="PIR" id="D69217">
    <property type="entry name" value="D69217"/>
</dbReference>
<dbReference type="RefSeq" id="WP_010876512.1">
    <property type="nucleotide sequence ID" value="NC_000916.1"/>
</dbReference>
<dbReference type="SMR" id="O26965"/>
<dbReference type="FunCoup" id="O26965">
    <property type="interactions" value="148"/>
</dbReference>
<dbReference type="STRING" id="187420.MTH_879"/>
<dbReference type="PaxDb" id="187420-MTH_879"/>
<dbReference type="EnsemblBacteria" id="AAB85377">
    <property type="protein sequence ID" value="AAB85377"/>
    <property type="gene ID" value="MTH_879"/>
</dbReference>
<dbReference type="GeneID" id="1471287"/>
<dbReference type="GeneID" id="77401413"/>
<dbReference type="KEGG" id="mth:MTH_879"/>
<dbReference type="PATRIC" id="fig|187420.15.peg.864"/>
<dbReference type="HOGENOM" id="CLU_079546_0_0_2"/>
<dbReference type="InParanoid" id="O26965"/>
<dbReference type="UniPathway" id="UPA00159">
    <property type="reaction ID" value="UER00275"/>
</dbReference>
<dbReference type="Proteomes" id="UP000005223">
    <property type="component" value="Chromosome"/>
</dbReference>
<dbReference type="GO" id="GO:0005737">
    <property type="term" value="C:cytoplasm"/>
    <property type="evidence" value="ECO:0007669"/>
    <property type="project" value="UniProtKB-SubCell"/>
</dbReference>
<dbReference type="GO" id="GO:0005524">
    <property type="term" value="F:ATP binding"/>
    <property type="evidence" value="ECO:0007669"/>
    <property type="project" value="UniProtKB-KW"/>
</dbReference>
<dbReference type="GO" id="GO:0033862">
    <property type="term" value="F:UMP kinase activity"/>
    <property type="evidence" value="ECO:0007669"/>
    <property type="project" value="UniProtKB-EC"/>
</dbReference>
<dbReference type="GO" id="GO:0044210">
    <property type="term" value="P:'de novo' CTP biosynthetic process"/>
    <property type="evidence" value="ECO:0007669"/>
    <property type="project" value="UniProtKB-UniRule"/>
</dbReference>
<dbReference type="GO" id="GO:0006225">
    <property type="term" value="P:UDP biosynthetic process"/>
    <property type="evidence" value="ECO:0007669"/>
    <property type="project" value="TreeGrafter"/>
</dbReference>
<dbReference type="CDD" id="cd04253">
    <property type="entry name" value="AAK_UMPK-PyrH-Pf"/>
    <property type="match status" value="1"/>
</dbReference>
<dbReference type="Gene3D" id="3.40.1160.10">
    <property type="entry name" value="Acetylglutamate kinase-like"/>
    <property type="match status" value="1"/>
</dbReference>
<dbReference type="HAMAP" id="MF_01220_A">
    <property type="entry name" value="PyrH_A"/>
    <property type="match status" value="1"/>
</dbReference>
<dbReference type="InterPro" id="IPR036393">
    <property type="entry name" value="AceGlu_kinase-like_sf"/>
</dbReference>
<dbReference type="InterPro" id="IPR001048">
    <property type="entry name" value="Asp/Glu/Uridylate_kinase"/>
</dbReference>
<dbReference type="InterPro" id="IPR011817">
    <property type="entry name" value="Uridylate_kinase"/>
</dbReference>
<dbReference type="InterPro" id="IPR011818">
    <property type="entry name" value="Uridylate_kinase_arch/spir"/>
</dbReference>
<dbReference type="NCBIfam" id="TIGR02076">
    <property type="entry name" value="pyrH_arch"/>
    <property type="match status" value="1"/>
</dbReference>
<dbReference type="PANTHER" id="PTHR42833">
    <property type="entry name" value="URIDYLATE KINASE"/>
    <property type="match status" value="1"/>
</dbReference>
<dbReference type="PANTHER" id="PTHR42833:SF4">
    <property type="entry name" value="URIDYLATE KINASE PUMPKIN, CHLOROPLASTIC"/>
    <property type="match status" value="1"/>
</dbReference>
<dbReference type="Pfam" id="PF00696">
    <property type="entry name" value="AA_kinase"/>
    <property type="match status" value="1"/>
</dbReference>
<dbReference type="PIRSF" id="PIRSF005650">
    <property type="entry name" value="Uridylate_kin"/>
    <property type="match status" value="1"/>
</dbReference>
<dbReference type="SUPFAM" id="SSF53633">
    <property type="entry name" value="Carbamate kinase-like"/>
    <property type="match status" value="1"/>
</dbReference>
<organism>
    <name type="scientific">Methanothermobacter thermautotrophicus (strain ATCC 29096 / DSM 1053 / JCM 10044 / NBRC 100330 / Delta H)</name>
    <name type="common">Methanobacterium thermoautotrophicum</name>
    <dbReference type="NCBI Taxonomy" id="187420"/>
    <lineage>
        <taxon>Archaea</taxon>
        <taxon>Methanobacteriati</taxon>
        <taxon>Methanobacteriota</taxon>
        <taxon>Methanomada group</taxon>
        <taxon>Methanobacteria</taxon>
        <taxon>Methanobacteriales</taxon>
        <taxon>Methanobacteriaceae</taxon>
        <taxon>Methanothermobacter</taxon>
    </lineage>
</organism>
<proteinExistence type="inferred from homology"/>
<gene>
    <name evidence="1" type="primary">pyrH</name>
    <name type="ordered locus">MTH_879</name>
</gene>
<feature type="chain" id="PRO_0000143920" description="Uridylate kinase">
    <location>
        <begin position="1"/>
        <end position="224"/>
    </location>
</feature>
<feature type="binding site" evidence="1">
    <location>
        <begin position="9"/>
        <end position="10"/>
    </location>
    <ligand>
        <name>ATP</name>
        <dbReference type="ChEBI" id="CHEBI:30616"/>
    </ligand>
</feature>
<feature type="binding site" evidence="1">
    <location>
        <position position="43"/>
    </location>
    <ligand>
        <name>UMP</name>
        <dbReference type="ChEBI" id="CHEBI:57865"/>
    </ligand>
</feature>
<feature type="binding site" evidence="1">
    <location>
        <position position="44"/>
    </location>
    <ligand>
        <name>ATP</name>
        <dbReference type="ChEBI" id="CHEBI:30616"/>
    </ligand>
</feature>
<feature type="binding site" evidence="1">
    <location>
        <position position="48"/>
    </location>
    <ligand>
        <name>ATP</name>
        <dbReference type="ChEBI" id="CHEBI:30616"/>
    </ligand>
</feature>
<feature type="binding site" evidence="1">
    <location>
        <position position="65"/>
    </location>
    <ligand>
        <name>UMP</name>
        <dbReference type="ChEBI" id="CHEBI:57865"/>
    </ligand>
</feature>
<feature type="binding site" evidence="1">
    <location>
        <begin position="113"/>
        <end position="119"/>
    </location>
    <ligand>
        <name>UMP</name>
        <dbReference type="ChEBI" id="CHEBI:57865"/>
    </ligand>
</feature>
<feature type="binding site" evidence="1">
    <location>
        <position position="139"/>
    </location>
    <ligand>
        <name>ATP</name>
        <dbReference type="ChEBI" id="CHEBI:30616"/>
    </ligand>
</feature>
<feature type="binding site" evidence="1">
    <location>
        <position position="145"/>
    </location>
    <ligand>
        <name>ATP</name>
        <dbReference type="ChEBI" id="CHEBI:30616"/>
    </ligand>
</feature>
<feature type="binding site" evidence="1">
    <location>
        <position position="148"/>
    </location>
    <ligand>
        <name>ATP</name>
        <dbReference type="ChEBI" id="CHEBI:30616"/>
    </ligand>
</feature>
<keyword id="KW-0067">ATP-binding</keyword>
<keyword id="KW-0963">Cytoplasm</keyword>
<keyword id="KW-0418">Kinase</keyword>
<keyword id="KW-0547">Nucleotide-binding</keyword>
<keyword id="KW-0665">Pyrimidine biosynthesis</keyword>
<keyword id="KW-1185">Reference proteome</keyword>
<keyword id="KW-0808">Transferase</keyword>
<reference key="1">
    <citation type="journal article" date="1997" name="J. Bacteriol.">
        <title>Complete genome sequence of Methanobacterium thermoautotrophicum deltaH: functional analysis and comparative genomics.</title>
        <authorList>
            <person name="Smith D.R."/>
            <person name="Doucette-Stamm L.A."/>
            <person name="Deloughery C."/>
            <person name="Lee H.-M."/>
            <person name="Dubois J."/>
            <person name="Aldredge T."/>
            <person name="Bashirzadeh R."/>
            <person name="Blakely D."/>
            <person name="Cook R."/>
            <person name="Gilbert K."/>
            <person name="Harrison D."/>
            <person name="Hoang L."/>
            <person name="Keagle P."/>
            <person name="Lumm W."/>
            <person name="Pothier B."/>
            <person name="Qiu D."/>
            <person name="Spadafora R."/>
            <person name="Vicare R."/>
            <person name="Wang Y."/>
            <person name="Wierzbowski J."/>
            <person name="Gibson R."/>
            <person name="Jiwani N."/>
            <person name="Caruso A."/>
            <person name="Bush D."/>
            <person name="Safer H."/>
            <person name="Patwell D."/>
            <person name="Prabhakar S."/>
            <person name="McDougall S."/>
            <person name="Shimer G."/>
            <person name="Goyal A."/>
            <person name="Pietrovski S."/>
            <person name="Church G.M."/>
            <person name="Daniels C.J."/>
            <person name="Mao J.-I."/>
            <person name="Rice P."/>
            <person name="Noelling J."/>
            <person name="Reeve J.N."/>
        </authorList>
    </citation>
    <scope>NUCLEOTIDE SEQUENCE [LARGE SCALE GENOMIC DNA]</scope>
    <source>
        <strain>ATCC 29096 / DSM 1053 / JCM 10044 / NBRC 100330 / Delta H</strain>
    </source>
</reference>
<protein>
    <recommendedName>
        <fullName evidence="1">Uridylate kinase</fullName>
        <shortName evidence="1">UK</shortName>
        <ecNumber evidence="1">2.7.4.22</ecNumber>
    </recommendedName>
    <alternativeName>
        <fullName evidence="1">Uridine monophosphate kinase</fullName>
        <shortName evidence="1">UMP kinase</shortName>
        <shortName evidence="1">UMPK</shortName>
    </alternativeName>
</protein>